<organism>
    <name type="scientific">Agrobacterium fabrum (strain C58 / ATCC 33970)</name>
    <name type="common">Agrobacterium tumefaciens (strain C58)</name>
    <dbReference type="NCBI Taxonomy" id="176299"/>
    <lineage>
        <taxon>Bacteria</taxon>
        <taxon>Pseudomonadati</taxon>
        <taxon>Pseudomonadota</taxon>
        <taxon>Alphaproteobacteria</taxon>
        <taxon>Hyphomicrobiales</taxon>
        <taxon>Rhizobiaceae</taxon>
        <taxon>Rhizobium/Agrobacterium group</taxon>
        <taxon>Agrobacterium</taxon>
        <taxon>Agrobacterium tumefaciens complex</taxon>
    </lineage>
</organism>
<protein>
    <recommendedName>
        <fullName evidence="1">Thymidine kinase</fullName>
        <ecNumber evidence="1">2.7.1.21</ecNumber>
    </recommendedName>
</protein>
<name>KITH_AGRFC</name>
<reference key="1">
    <citation type="journal article" date="2001" name="Science">
        <title>The genome of the natural genetic engineer Agrobacterium tumefaciens C58.</title>
        <authorList>
            <person name="Wood D.W."/>
            <person name="Setubal J.C."/>
            <person name="Kaul R."/>
            <person name="Monks D.E."/>
            <person name="Kitajima J.P."/>
            <person name="Okura V.K."/>
            <person name="Zhou Y."/>
            <person name="Chen L."/>
            <person name="Wood G.E."/>
            <person name="Almeida N.F. Jr."/>
            <person name="Woo L."/>
            <person name="Chen Y."/>
            <person name="Paulsen I.T."/>
            <person name="Eisen J.A."/>
            <person name="Karp P.D."/>
            <person name="Bovee D. Sr."/>
            <person name="Chapman P."/>
            <person name="Clendenning J."/>
            <person name="Deatherage G."/>
            <person name="Gillet W."/>
            <person name="Grant C."/>
            <person name="Kutyavin T."/>
            <person name="Levy R."/>
            <person name="Li M.-J."/>
            <person name="McClelland E."/>
            <person name="Palmieri A."/>
            <person name="Raymond C."/>
            <person name="Rouse G."/>
            <person name="Saenphimmachak C."/>
            <person name="Wu Z."/>
            <person name="Romero P."/>
            <person name="Gordon D."/>
            <person name="Zhang S."/>
            <person name="Yoo H."/>
            <person name="Tao Y."/>
            <person name="Biddle P."/>
            <person name="Jung M."/>
            <person name="Krespan W."/>
            <person name="Perry M."/>
            <person name="Gordon-Kamm B."/>
            <person name="Liao L."/>
            <person name="Kim S."/>
            <person name="Hendrick C."/>
            <person name="Zhao Z.-Y."/>
            <person name="Dolan M."/>
            <person name="Chumley F."/>
            <person name="Tingey S.V."/>
            <person name="Tomb J.-F."/>
            <person name="Gordon M.P."/>
            <person name="Olson M.V."/>
            <person name="Nester E.W."/>
        </authorList>
    </citation>
    <scope>NUCLEOTIDE SEQUENCE [LARGE SCALE GENOMIC DNA]</scope>
    <source>
        <strain>C58 / ATCC 33970</strain>
    </source>
</reference>
<reference key="2">
    <citation type="journal article" date="2001" name="Science">
        <title>Genome sequence of the plant pathogen and biotechnology agent Agrobacterium tumefaciens C58.</title>
        <authorList>
            <person name="Goodner B."/>
            <person name="Hinkle G."/>
            <person name="Gattung S."/>
            <person name="Miller N."/>
            <person name="Blanchard M."/>
            <person name="Qurollo B."/>
            <person name="Goldman B.S."/>
            <person name="Cao Y."/>
            <person name="Askenazi M."/>
            <person name="Halling C."/>
            <person name="Mullin L."/>
            <person name="Houmiel K."/>
            <person name="Gordon J."/>
            <person name="Vaudin M."/>
            <person name="Iartchouk O."/>
            <person name="Epp A."/>
            <person name="Liu F."/>
            <person name="Wollam C."/>
            <person name="Allinger M."/>
            <person name="Doughty D."/>
            <person name="Scott C."/>
            <person name="Lappas C."/>
            <person name="Markelz B."/>
            <person name="Flanagan C."/>
            <person name="Crowell C."/>
            <person name="Gurson J."/>
            <person name="Lomo C."/>
            <person name="Sear C."/>
            <person name="Strub G."/>
            <person name="Cielo C."/>
            <person name="Slater S."/>
        </authorList>
    </citation>
    <scope>NUCLEOTIDE SEQUENCE [LARGE SCALE GENOMIC DNA]</scope>
    <source>
        <strain>C58 / ATCC 33970</strain>
    </source>
</reference>
<sequence length="193" mass="21548">MAKLYFNYSTMNAGKSTMLLQASYNYQERGMRTLIFTAAFDDRAGVGRVASRIGLSSEARTFDENTDLFAEVAALHAQAPVACVFVDEANFLSEHHVWQLANIADRLNIPVMTYGLRTDFQGKLFPASKELLAIADELREIRTICHCGRKATMVARFDSEGKVVTEGAQIEVGGNGKYVSFCRRHWVETFNCS</sequence>
<comment type="catalytic activity">
    <reaction evidence="1">
        <text>thymidine + ATP = dTMP + ADP + H(+)</text>
        <dbReference type="Rhea" id="RHEA:19129"/>
        <dbReference type="ChEBI" id="CHEBI:15378"/>
        <dbReference type="ChEBI" id="CHEBI:17748"/>
        <dbReference type="ChEBI" id="CHEBI:30616"/>
        <dbReference type="ChEBI" id="CHEBI:63528"/>
        <dbReference type="ChEBI" id="CHEBI:456216"/>
        <dbReference type="EC" id="2.7.1.21"/>
    </reaction>
</comment>
<comment type="subunit">
    <text evidence="1">Homotetramer.</text>
</comment>
<comment type="subcellular location">
    <subcellularLocation>
        <location evidence="1">Cytoplasm</location>
    </subcellularLocation>
</comment>
<comment type="similarity">
    <text evidence="1">Belongs to the thymidine kinase family.</text>
</comment>
<comment type="sequence caution" evidence="2">
    <conflict type="erroneous initiation">
        <sequence resource="EMBL-CDS" id="AAK88024"/>
    </conflict>
</comment>
<gene>
    <name evidence="1" type="primary">tdk</name>
    <name type="ordered locus">Atu2282</name>
    <name type="ORF">AGR_C_4147</name>
</gene>
<evidence type="ECO:0000255" key="1">
    <source>
        <dbReference type="HAMAP-Rule" id="MF_00124"/>
    </source>
</evidence>
<evidence type="ECO:0000305" key="2"/>
<dbReference type="EC" id="2.7.1.21" evidence="1"/>
<dbReference type="EMBL" id="AE007869">
    <property type="protein sequence ID" value="AAK88024.2"/>
    <property type="status" value="ALT_INIT"/>
    <property type="molecule type" value="Genomic_DNA"/>
</dbReference>
<dbReference type="PIR" id="AI2856">
    <property type="entry name" value="AI2856"/>
</dbReference>
<dbReference type="PIR" id="G97633">
    <property type="entry name" value="G97633"/>
</dbReference>
<dbReference type="RefSeq" id="NP_355239.2">
    <property type="nucleotide sequence ID" value="NC_003062.2"/>
</dbReference>
<dbReference type="RefSeq" id="WP_006314642.1">
    <property type="nucleotide sequence ID" value="NC_003062.2"/>
</dbReference>
<dbReference type="SMR" id="Q7CXF9"/>
<dbReference type="STRING" id="176299.Atu2282"/>
<dbReference type="EnsemblBacteria" id="AAK88024">
    <property type="protein sequence ID" value="AAK88024"/>
    <property type="gene ID" value="Atu2282"/>
</dbReference>
<dbReference type="GeneID" id="1134320"/>
<dbReference type="KEGG" id="atu:Atu2282"/>
<dbReference type="PATRIC" id="fig|176299.10.peg.2294"/>
<dbReference type="eggNOG" id="COG1435">
    <property type="taxonomic scope" value="Bacteria"/>
</dbReference>
<dbReference type="HOGENOM" id="CLU_064400_2_1_5"/>
<dbReference type="OrthoDB" id="9781579at2"/>
<dbReference type="Proteomes" id="UP000000813">
    <property type="component" value="Chromosome circular"/>
</dbReference>
<dbReference type="GO" id="GO:0005829">
    <property type="term" value="C:cytosol"/>
    <property type="evidence" value="ECO:0007669"/>
    <property type="project" value="TreeGrafter"/>
</dbReference>
<dbReference type="GO" id="GO:0005524">
    <property type="term" value="F:ATP binding"/>
    <property type="evidence" value="ECO:0007669"/>
    <property type="project" value="UniProtKB-UniRule"/>
</dbReference>
<dbReference type="GO" id="GO:0004797">
    <property type="term" value="F:thymidine kinase activity"/>
    <property type="evidence" value="ECO:0007669"/>
    <property type="project" value="UniProtKB-UniRule"/>
</dbReference>
<dbReference type="GO" id="GO:0008270">
    <property type="term" value="F:zinc ion binding"/>
    <property type="evidence" value="ECO:0007669"/>
    <property type="project" value="UniProtKB-UniRule"/>
</dbReference>
<dbReference type="GO" id="GO:0071897">
    <property type="term" value="P:DNA biosynthetic process"/>
    <property type="evidence" value="ECO:0007669"/>
    <property type="project" value="UniProtKB-KW"/>
</dbReference>
<dbReference type="GO" id="GO:0046104">
    <property type="term" value="P:thymidine metabolic process"/>
    <property type="evidence" value="ECO:0007669"/>
    <property type="project" value="TreeGrafter"/>
</dbReference>
<dbReference type="Gene3D" id="3.30.60.20">
    <property type="match status" value="1"/>
</dbReference>
<dbReference type="Gene3D" id="3.40.50.300">
    <property type="entry name" value="P-loop containing nucleotide triphosphate hydrolases"/>
    <property type="match status" value="1"/>
</dbReference>
<dbReference type="HAMAP" id="MF_00124">
    <property type="entry name" value="Thymidine_kinase"/>
    <property type="match status" value="1"/>
</dbReference>
<dbReference type="InterPro" id="IPR027417">
    <property type="entry name" value="P-loop_NTPase"/>
</dbReference>
<dbReference type="InterPro" id="IPR001267">
    <property type="entry name" value="Thymidine_kinase"/>
</dbReference>
<dbReference type="NCBIfam" id="NF003300">
    <property type="entry name" value="PRK04296.1-5"/>
    <property type="match status" value="1"/>
</dbReference>
<dbReference type="PANTHER" id="PTHR11441">
    <property type="entry name" value="THYMIDINE KINASE"/>
    <property type="match status" value="1"/>
</dbReference>
<dbReference type="PANTHER" id="PTHR11441:SF0">
    <property type="entry name" value="THYMIDINE KINASE, CYTOSOLIC"/>
    <property type="match status" value="1"/>
</dbReference>
<dbReference type="Pfam" id="PF00265">
    <property type="entry name" value="TK"/>
    <property type="match status" value="1"/>
</dbReference>
<dbReference type="PIRSF" id="PIRSF035805">
    <property type="entry name" value="TK_cell"/>
    <property type="match status" value="1"/>
</dbReference>
<dbReference type="SUPFAM" id="SSF57716">
    <property type="entry name" value="Glucocorticoid receptor-like (DNA-binding domain)"/>
    <property type="match status" value="1"/>
</dbReference>
<dbReference type="SUPFAM" id="SSF52540">
    <property type="entry name" value="P-loop containing nucleoside triphosphate hydrolases"/>
    <property type="match status" value="1"/>
</dbReference>
<accession>Q7CXF9</accession>
<accession>Q8UD45</accession>
<keyword id="KW-0067">ATP-binding</keyword>
<keyword id="KW-0963">Cytoplasm</keyword>
<keyword id="KW-0237">DNA synthesis</keyword>
<keyword id="KW-0418">Kinase</keyword>
<keyword id="KW-0479">Metal-binding</keyword>
<keyword id="KW-0547">Nucleotide-binding</keyword>
<keyword id="KW-1185">Reference proteome</keyword>
<keyword id="KW-0808">Transferase</keyword>
<keyword id="KW-0862">Zinc</keyword>
<feature type="chain" id="PRO_0000242786" description="Thymidine kinase">
    <location>
        <begin position="1"/>
        <end position="193"/>
    </location>
</feature>
<feature type="active site" description="Proton acceptor" evidence="1">
    <location>
        <position position="88"/>
    </location>
</feature>
<feature type="binding site" evidence="1">
    <location>
        <begin position="9"/>
        <end position="16"/>
    </location>
    <ligand>
        <name>ATP</name>
        <dbReference type="ChEBI" id="CHEBI:30616"/>
    </ligand>
</feature>
<feature type="binding site" evidence="1">
    <location>
        <begin position="87"/>
        <end position="90"/>
    </location>
    <ligand>
        <name>ATP</name>
        <dbReference type="ChEBI" id="CHEBI:30616"/>
    </ligand>
</feature>
<feature type="binding site" evidence="1">
    <location>
        <position position="145"/>
    </location>
    <ligand>
        <name>Zn(2+)</name>
        <dbReference type="ChEBI" id="CHEBI:29105"/>
    </ligand>
</feature>
<feature type="binding site" evidence="1">
    <location>
        <position position="147"/>
    </location>
    <ligand>
        <name>Zn(2+)</name>
        <dbReference type="ChEBI" id="CHEBI:29105"/>
    </ligand>
</feature>
<feature type="binding site" evidence="1">
    <location>
        <position position="182"/>
    </location>
    <ligand>
        <name>Zn(2+)</name>
        <dbReference type="ChEBI" id="CHEBI:29105"/>
    </ligand>
</feature>
<feature type="binding site" evidence="1">
    <location>
        <position position="185"/>
    </location>
    <ligand>
        <name>Zn(2+)</name>
        <dbReference type="ChEBI" id="CHEBI:29105"/>
    </ligand>
</feature>
<proteinExistence type="inferred from homology"/>